<comment type="function">
    <text evidence="2 6">May function as a chaperone that inhibits aggregation of misfolded proteins (PubMed:24508390). Negatively regulates the unfolded protein response (UPR) through binding to UPR sensors such as ERN1, which in turn inactivates ERN1 signaling (By similarity). May also regulate the UPR via the EIF2AK3 UPR sensor (By similarity). Plays a role in platelet aggregation and activation by agonists such as convulxin, collagen and thrombin (By similarity).</text>
</comment>
<comment type="catalytic activity">
    <reaction evidence="2">
        <text>Catalyzes the rearrangement of -S-S- bonds in proteins.</text>
        <dbReference type="EC" id="5.3.4.1"/>
    </reaction>
</comment>
<comment type="subunit">
    <text evidence="2">Part of a large chaperone multiprotein complex comprising DNAJB11, HSP90B1, HSPA5, HYOU, PDIA2, PDIA4, PDIA6, PPIB, SDF2L1, UGGT1 and very small amounts of ERP29, but not, or at very low levels, CALR nor CANX. Interacts with MICA on the surface of tumor cells, leading to MICA disulfide bond reduction which is required for its release from tumor cells. Interacts with ITGB3 following platelet stimulation. Interacts with ERN1; the interaction is direct. Interacts with EIF2AK3.</text>
</comment>
<comment type="subcellular location">
    <subcellularLocation>
        <location evidence="2">Endoplasmic reticulum lumen</location>
    </subcellularLocation>
    <subcellularLocation>
        <location evidence="2">Cell membrane</location>
    </subcellularLocation>
    <subcellularLocation>
        <location evidence="2">Melanosome</location>
    </subcellularLocation>
</comment>
<comment type="similarity">
    <text evidence="7">Belongs to the protein disulfide isomerase family.</text>
</comment>
<comment type="sequence caution" evidence="7">
    <conflict type="erroneous initiation">
        <sequence resource="EMBL-CDS" id="AAH06865"/>
    </conflict>
    <text>Extended N-terminus.</text>
</comment>
<comment type="sequence caution" evidence="7">
    <conflict type="erroneous initiation">
        <sequence resource="EMBL-CDS" id="BAC36392"/>
    </conflict>
    <text>Extended N-terminus.</text>
</comment>
<accession>Q922R8</accession>
<accession>Q8BK54</accession>
<gene>
    <name type="primary">Pdia6</name>
    <name type="synonym">Txndc7</name>
</gene>
<sequence length="440" mass="48100">MARLVLGLVSCTFFLAVSGLYSSSDDVIELTPSNFNREVIQSDGLWLVEFYAPWCGHCQRLTPEWKKAATALKDVVKVGAVNADKHQSLGGQYGVQGFPTIKIFGANKNKPEDYQGGRTGEAIVDAALSALRQLVKDRLGGRSGGYSSGKQGRGDSSSKKDVVELTDDTFDKNVLDSEDVWMVEFYAPWCGHCKNLEPEWAAAATEVKEQTKGKVKLAAVDATVNQVLASRYGIKGFPTIKIFQKGESPVDYDGGRTRSDIVSRALDLFSDNAPPPELLEIINEDIAKKTCEEHQLCVVAVLPHILDTGAAGRNSYLEVLLKLADKYKKKMWGWLWTEAGAQYELENALGIGGFGYPAMAAINARKMKFALLKGSFSEQGINEFLRELSFGRGSTAPVGGGSFPTITPREPWDGKDGELPVEDDIDLSDVELDDLEKDEL</sequence>
<dbReference type="EC" id="5.3.4.1" evidence="2"/>
<dbReference type="EMBL" id="AK076558">
    <property type="protein sequence ID" value="BAC36392.1"/>
    <property type="status" value="ALT_INIT"/>
    <property type="molecule type" value="mRNA"/>
</dbReference>
<dbReference type="EMBL" id="BC006865">
    <property type="protein sequence ID" value="AAH06865.2"/>
    <property type="status" value="ALT_INIT"/>
    <property type="molecule type" value="mRNA"/>
</dbReference>
<dbReference type="CCDS" id="CCDS25826.1"/>
<dbReference type="RefSeq" id="NP_082235.1">
    <property type="nucleotide sequence ID" value="NM_027959.3"/>
</dbReference>
<dbReference type="PDB" id="2DML">
    <property type="method" value="NMR"/>
    <property type="chains" value="A=16-132"/>
</dbReference>
<dbReference type="PDBsum" id="2DML"/>
<dbReference type="SMR" id="Q922R8"/>
<dbReference type="BioGRID" id="214980">
    <property type="interactions" value="36"/>
</dbReference>
<dbReference type="FunCoup" id="Q922R8">
    <property type="interactions" value="2413"/>
</dbReference>
<dbReference type="IntAct" id="Q922R8">
    <property type="interactions" value="2"/>
</dbReference>
<dbReference type="MINT" id="Q922R8"/>
<dbReference type="STRING" id="10090.ENSMUSP00000052912"/>
<dbReference type="GlyGen" id="Q922R8">
    <property type="glycosylation" value="2 sites, 1 O-linked glycan (2 sites)"/>
</dbReference>
<dbReference type="iPTMnet" id="Q922R8"/>
<dbReference type="PhosphoSitePlus" id="Q922R8"/>
<dbReference type="SwissPalm" id="Q922R8"/>
<dbReference type="REPRODUCTION-2DPAGE" id="Q922R8"/>
<dbReference type="jPOST" id="Q922R8"/>
<dbReference type="PaxDb" id="10090-ENSMUSP00000052912"/>
<dbReference type="PeptideAtlas" id="Q922R8"/>
<dbReference type="ProteomicsDB" id="288081"/>
<dbReference type="Pumba" id="Q922R8"/>
<dbReference type="DNASU" id="71853"/>
<dbReference type="GeneID" id="71853"/>
<dbReference type="KEGG" id="mmu:71853"/>
<dbReference type="AGR" id="MGI:1919103"/>
<dbReference type="CTD" id="10130"/>
<dbReference type="MGI" id="MGI:1919103">
    <property type="gene designation" value="Pdia6"/>
</dbReference>
<dbReference type="eggNOG" id="KOG0191">
    <property type="taxonomic scope" value="Eukaryota"/>
</dbReference>
<dbReference type="InParanoid" id="Q922R8"/>
<dbReference type="Reactome" id="R-MMU-381426">
    <property type="pathway name" value="Regulation of Insulin-like Growth Factor (IGF) transport and uptake by Insulin-like Growth Factor Binding Proteins (IGFBPs)"/>
</dbReference>
<dbReference type="Reactome" id="R-MMU-8957275">
    <property type="pathway name" value="Post-translational protein phosphorylation"/>
</dbReference>
<dbReference type="BioGRID-ORCS" id="71853">
    <property type="hits" value="1 hit in 79 CRISPR screens"/>
</dbReference>
<dbReference type="ChiTaRS" id="Pdia6">
    <property type="organism name" value="mouse"/>
</dbReference>
<dbReference type="EvolutionaryTrace" id="Q922R8"/>
<dbReference type="PRO" id="PR:Q922R8"/>
<dbReference type="Proteomes" id="UP000000589">
    <property type="component" value="Unplaced"/>
</dbReference>
<dbReference type="RNAct" id="Q922R8">
    <property type="molecule type" value="protein"/>
</dbReference>
<dbReference type="GO" id="GO:0034663">
    <property type="term" value="C:endoplasmic reticulum chaperone complex"/>
    <property type="evidence" value="ECO:0000314"/>
    <property type="project" value="ParkinsonsUK-UCL"/>
</dbReference>
<dbReference type="GO" id="GO:0005788">
    <property type="term" value="C:endoplasmic reticulum lumen"/>
    <property type="evidence" value="ECO:0007669"/>
    <property type="project" value="UniProtKB-SubCell"/>
</dbReference>
<dbReference type="GO" id="GO:0042470">
    <property type="term" value="C:melanosome"/>
    <property type="evidence" value="ECO:0000250"/>
    <property type="project" value="UniProtKB"/>
</dbReference>
<dbReference type="GO" id="GO:0005886">
    <property type="term" value="C:plasma membrane"/>
    <property type="evidence" value="ECO:0000250"/>
    <property type="project" value="UniProtKB"/>
</dbReference>
<dbReference type="GO" id="GO:0003756">
    <property type="term" value="F:protein disulfide isomerase activity"/>
    <property type="evidence" value="ECO:0000250"/>
    <property type="project" value="UniProtKB"/>
</dbReference>
<dbReference type="GO" id="GO:0015035">
    <property type="term" value="F:protein-disulfide reductase activity"/>
    <property type="evidence" value="ECO:0000315"/>
    <property type="project" value="WormBase"/>
</dbReference>
<dbReference type="GO" id="GO:1903895">
    <property type="term" value="P:negative regulation of IRE1-mediated unfolded protein response"/>
    <property type="evidence" value="ECO:0000315"/>
    <property type="project" value="WormBase"/>
</dbReference>
<dbReference type="GO" id="GO:0030168">
    <property type="term" value="P:platelet activation"/>
    <property type="evidence" value="ECO:0000250"/>
    <property type="project" value="UniProtKB"/>
</dbReference>
<dbReference type="GO" id="GO:0070527">
    <property type="term" value="P:platelet aggregation"/>
    <property type="evidence" value="ECO:0000250"/>
    <property type="project" value="UniProtKB"/>
</dbReference>
<dbReference type="CDD" id="cd02983">
    <property type="entry name" value="P5_C"/>
    <property type="match status" value="1"/>
</dbReference>
<dbReference type="CDD" id="cd03001">
    <property type="entry name" value="PDI_a_P5"/>
    <property type="match status" value="2"/>
</dbReference>
<dbReference type="FunFam" id="3.40.30.10:FF:000032">
    <property type="entry name" value="Protein disulfide-isomerase A6 homolog"/>
    <property type="match status" value="1"/>
</dbReference>
<dbReference type="FunFam" id="3.40.30.10:FF:000050">
    <property type="entry name" value="protein disulfide-isomerase A6 isoform X1"/>
    <property type="match status" value="1"/>
</dbReference>
<dbReference type="Gene3D" id="3.40.30.10">
    <property type="entry name" value="Glutaredoxin"/>
    <property type="match status" value="2"/>
</dbReference>
<dbReference type="InterPro" id="IPR005788">
    <property type="entry name" value="PDI_thioredoxin-like_dom"/>
</dbReference>
<dbReference type="InterPro" id="IPR036249">
    <property type="entry name" value="Thioredoxin-like_sf"/>
</dbReference>
<dbReference type="InterPro" id="IPR017937">
    <property type="entry name" value="Thioredoxin_CS"/>
</dbReference>
<dbReference type="InterPro" id="IPR013766">
    <property type="entry name" value="Thioredoxin_domain"/>
</dbReference>
<dbReference type="NCBIfam" id="TIGR01126">
    <property type="entry name" value="pdi_dom"/>
    <property type="match status" value="2"/>
</dbReference>
<dbReference type="PANTHER" id="PTHR45815">
    <property type="entry name" value="PROTEIN DISULFIDE-ISOMERASE A6"/>
    <property type="match status" value="1"/>
</dbReference>
<dbReference type="PANTHER" id="PTHR45815:SF3">
    <property type="entry name" value="PROTEIN DISULFIDE-ISOMERASE A6"/>
    <property type="match status" value="1"/>
</dbReference>
<dbReference type="Pfam" id="PF24541">
    <property type="entry name" value="Thioredox_PDIA6_C"/>
    <property type="match status" value="1"/>
</dbReference>
<dbReference type="Pfam" id="PF00085">
    <property type="entry name" value="Thioredoxin"/>
    <property type="match status" value="2"/>
</dbReference>
<dbReference type="PRINTS" id="PR00421">
    <property type="entry name" value="THIOREDOXIN"/>
</dbReference>
<dbReference type="SUPFAM" id="SSF52833">
    <property type="entry name" value="Thioredoxin-like"/>
    <property type="match status" value="3"/>
</dbReference>
<dbReference type="PROSITE" id="PS00014">
    <property type="entry name" value="ER_TARGET"/>
    <property type="match status" value="1"/>
</dbReference>
<dbReference type="PROSITE" id="PS00194">
    <property type="entry name" value="THIOREDOXIN_1"/>
    <property type="match status" value="2"/>
</dbReference>
<dbReference type="PROSITE" id="PS51352">
    <property type="entry name" value="THIOREDOXIN_2"/>
    <property type="match status" value="2"/>
</dbReference>
<proteinExistence type="evidence at protein level"/>
<protein>
    <recommendedName>
        <fullName>Protein disulfide-isomerase A6</fullName>
        <ecNumber evidence="2">5.3.4.1</ecNumber>
    </recommendedName>
    <alternativeName>
        <fullName>Thioredoxin domain-containing protein 7</fullName>
    </alternativeName>
</protein>
<evidence type="ECO:0000250" key="1"/>
<evidence type="ECO:0000250" key="2">
    <source>
        <dbReference type="UniProtKB" id="Q15084"/>
    </source>
</evidence>
<evidence type="ECO:0000255" key="3">
    <source>
        <dbReference type="PROSITE-ProRule" id="PRU00691"/>
    </source>
</evidence>
<evidence type="ECO:0000255" key="4">
    <source>
        <dbReference type="PROSITE-ProRule" id="PRU10138"/>
    </source>
</evidence>
<evidence type="ECO:0000256" key="5">
    <source>
        <dbReference type="SAM" id="MobiDB-lite"/>
    </source>
</evidence>
<evidence type="ECO:0000269" key="6">
    <source>
    </source>
</evidence>
<evidence type="ECO:0000305" key="7"/>
<evidence type="ECO:0007744" key="8">
    <source>
    </source>
</evidence>
<evidence type="ECO:0007829" key="9">
    <source>
        <dbReference type="PDB" id="2DML"/>
    </source>
</evidence>
<reference key="1">
    <citation type="journal article" date="2005" name="Science">
        <title>The transcriptional landscape of the mammalian genome.</title>
        <authorList>
            <person name="Carninci P."/>
            <person name="Kasukawa T."/>
            <person name="Katayama S."/>
            <person name="Gough J."/>
            <person name="Frith M.C."/>
            <person name="Maeda N."/>
            <person name="Oyama R."/>
            <person name="Ravasi T."/>
            <person name="Lenhard B."/>
            <person name="Wells C."/>
            <person name="Kodzius R."/>
            <person name="Shimokawa K."/>
            <person name="Bajic V.B."/>
            <person name="Brenner S.E."/>
            <person name="Batalov S."/>
            <person name="Forrest A.R."/>
            <person name="Zavolan M."/>
            <person name="Davis M.J."/>
            <person name="Wilming L.G."/>
            <person name="Aidinis V."/>
            <person name="Allen J.E."/>
            <person name="Ambesi-Impiombato A."/>
            <person name="Apweiler R."/>
            <person name="Aturaliya R.N."/>
            <person name="Bailey T.L."/>
            <person name="Bansal M."/>
            <person name="Baxter L."/>
            <person name="Beisel K.W."/>
            <person name="Bersano T."/>
            <person name="Bono H."/>
            <person name="Chalk A.M."/>
            <person name="Chiu K.P."/>
            <person name="Choudhary V."/>
            <person name="Christoffels A."/>
            <person name="Clutterbuck D.R."/>
            <person name="Crowe M.L."/>
            <person name="Dalla E."/>
            <person name="Dalrymple B.P."/>
            <person name="de Bono B."/>
            <person name="Della Gatta G."/>
            <person name="di Bernardo D."/>
            <person name="Down T."/>
            <person name="Engstrom P."/>
            <person name="Fagiolini M."/>
            <person name="Faulkner G."/>
            <person name="Fletcher C.F."/>
            <person name="Fukushima T."/>
            <person name="Furuno M."/>
            <person name="Futaki S."/>
            <person name="Gariboldi M."/>
            <person name="Georgii-Hemming P."/>
            <person name="Gingeras T.R."/>
            <person name="Gojobori T."/>
            <person name="Green R.E."/>
            <person name="Gustincich S."/>
            <person name="Harbers M."/>
            <person name="Hayashi Y."/>
            <person name="Hensch T.K."/>
            <person name="Hirokawa N."/>
            <person name="Hill D."/>
            <person name="Huminiecki L."/>
            <person name="Iacono M."/>
            <person name="Ikeo K."/>
            <person name="Iwama A."/>
            <person name="Ishikawa T."/>
            <person name="Jakt M."/>
            <person name="Kanapin A."/>
            <person name="Katoh M."/>
            <person name="Kawasawa Y."/>
            <person name="Kelso J."/>
            <person name="Kitamura H."/>
            <person name="Kitano H."/>
            <person name="Kollias G."/>
            <person name="Krishnan S.P."/>
            <person name="Kruger A."/>
            <person name="Kummerfeld S.K."/>
            <person name="Kurochkin I.V."/>
            <person name="Lareau L.F."/>
            <person name="Lazarevic D."/>
            <person name="Lipovich L."/>
            <person name="Liu J."/>
            <person name="Liuni S."/>
            <person name="McWilliam S."/>
            <person name="Madan Babu M."/>
            <person name="Madera M."/>
            <person name="Marchionni L."/>
            <person name="Matsuda H."/>
            <person name="Matsuzawa S."/>
            <person name="Miki H."/>
            <person name="Mignone F."/>
            <person name="Miyake S."/>
            <person name="Morris K."/>
            <person name="Mottagui-Tabar S."/>
            <person name="Mulder N."/>
            <person name="Nakano N."/>
            <person name="Nakauchi H."/>
            <person name="Ng P."/>
            <person name="Nilsson R."/>
            <person name="Nishiguchi S."/>
            <person name="Nishikawa S."/>
            <person name="Nori F."/>
            <person name="Ohara O."/>
            <person name="Okazaki Y."/>
            <person name="Orlando V."/>
            <person name="Pang K.C."/>
            <person name="Pavan W.J."/>
            <person name="Pavesi G."/>
            <person name="Pesole G."/>
            <person name="Petrovsky N."/>
            <person name="Piazza S."/>
            <person name="Reed J."/>
            <person name="Reid J.F."/>
            <person name="Ring B.Z."/>
            <person name="Ringwald M."/>
            <person name="Rost B."/>
            <person name="Ruan Y."/>
            <person name="Salzberg S.L."/>
            <person name="Sandelin A."/>
            <person name="Schneider C."/>
            <person name="Schoenbach C."/>
            <person name="Sekiguchi K."/>
            <person name="Semple C.A."/>
            <person name="Seno S."/>
            <person name="Sessa L."/>
            <person name="Sheng Y."/>
            <person name="Shibata Y."/>
            <person name="Shimada H."/>
            <person name="Shimada K."/>
            <person name="Silva D."/>
            <person name="Sinclair B."/>
            <person name="Sperling S."/>
            <person name="Stupka E."/>
            <person name="Sugiura K."/>
            <person name="Sultana R."/>
            <person name="Takenaka Y."/>
            <person name="Taki K."/>
            <person name="Tammoja K."/>
            <person name="Tan S.L."/>
            <person name="Tang S."/>
            <person name="Taylor M.S."/>
            <person name="Tegner J."/>
            <person name="Teichmann S.A."/>
            <person name="Ueda H.R."/>
            <person name="van Nimwegen E."/>
            <person name="Verardo R."/>
            <person name="Wei C.L."/>
            <person name="Yagi K."/>
            <person name="Yamanishi H."/>
            <person name="Zabarovsky E."/>
            <person name="Zhu S."/>
            <person name="Zimmer A."/>
            <person name="Hide W."/>
            <person name="Bult C."/>
            <person name="Grimmond S.M."/>
            <person name="Teasdale R.D."/>
            <person name="Liu E.T."/>
            <person name="Brusic V."/>
            <person name="Quackenbush J."/>
            <person name="Wahlestedt C."/>
            <person name="Mattick J.S."/>
            <person name="Hume D.A."/>
            <person name="Kai C."/>
            <person name="Sasaki D."/>
            <person name="Tomaru Y."/>
            <person name="Fukuda S."/>
            <person name="Kanamori-Katayama M."/>
            <person name="Suzuki M."/>
            <person name="Aoki J."/>
            <person name="Arakawa T."/>
            <person name="Iida J."/>
            <person name="Imamura K."/>
            <person name="Itoh M."/>
            <person name="Kato T."/>
            <person name="Kawaji H."/>
            <person name="Kawagashira N."/>
            <person name="Kawashima T."/>
            <person name="Kojima M."/>
            <person name="Kondo S."/>
            <person name="Konno H."/>
            <person name="Nakano K."/>
            <person name="Ninomiya N."/>
            <person name="Nishio T."/>
            <person name="Okada M."/>
            <person name="Plessy C."/>
            <person name="Shibata K."/>
            <person name="Shiraki T."/>
            <person name="Suzuki S."/>
            <person name="Tagami M."/>
            <person name="Waki K."/>
            <person name="Watahiki A."/>
            <person name="Okamura-Oho Y."/>
            <person name="Suzuki H."/>
            <person name="Kawai J."/>
            <person name="Hayashizaki Y."/>
        </authorList>
    </citation>
    <scope>NUCLEOTIDE SEQUENCE [LARGE SCALE MRNA]</scope>
    <source>
        <strain>C57BL/6J</strain>
        <tissue>Testis</tissue>
    </source>
</reference>
<reference key="2">
    <citation type="journal article" date="2004" name="Genome Res.">
        <title>The status, quality, and expansion of the NIH full-length cDNA project: the Mammalian Gene Collection (MGC).</title>
        <authorList>
            <consortium name="The MGC Project Team"/>
        </authorList>
    </citation>
    <scope>NUCLEOTIDE SEQUENCE [LARGE SCALE MRNA]</scope>
    <source>
        <strain>Czech II</strain>
        <tissue>Mammary tumor</tissue>
    </source>
</reference>
<reference key="3">
    <citation type="submission" date="2007-04" db="UniProtKB">
        <authorList>
            <person name="Lubec G."/>
            <person name="Kang S.U."/>
        </authorList>
    </citation>
    <scope>PROTEIN SEQUENCE OF 119-132 AND 393-409</scope>
    <scope>IDENTIFICATION BY MASS SPECTROMETRY</scope>
    <source>
        <strain>C57BL/6J</strain>
        <tissue>Brain</tissue>
    </source>
</reference>
<reference key="4">
    <citation type="journal article" date="2010" name="Cell">
        <title>A tissue-specific atlas of mouse protein phosphorylation and expression.</title>
        <authorList>
            <person name="Huttlin E.L."/>
            <person name="Jedrychowski M.P."/>
            <person name="Elias J.E."/>
            <person name="Goswami T."/>
            <person name="Rad R."/>
            <person name="Beausoleil S.A."/>
            <person name="Villen J."/>
            <person name="Haas W."/>
            <person name="Sowa M.E."/>
            <person name="Gygi S.P."/>
        </authorList>
    </citation>
    <scope>PHOSPHORYLATION [LARGE SCALE ANALYSIS] AT SER-129 AND SER-428</scope>
    <scope>IDENTIFICATION BY MASS SPECTROMETRY [LARGE SCALE ANALYSIS]</scope>
    <source>
        <tissue>Brain</tissue>
        <tissue>Brown adipose tissue</tissue>
        <tissue>Heart</tissue>
        <tissue>Kidney</tissue>
        <tissue>Liver</tissue>
        <tissue>Lung</tissue>
        <tissue>Pancreas</tissue>
        <tissue>Spleen</tissue>
        <tissue>Testis</tissue>
    </source>
</reference>
<reference key="5">
    <citation type="journal article" date="2014" name="Mol. Cell">
        <title>Protein disulfide isomerase A6 controls the decay of IRE1alpha signaling via disulfide-dependent association.</title>
        <authorList>
            <person name="Eletto D."/>
            <person name="Eletto D."/>
            <person name="Dersh D."/>
            <person name="Gidalevitz T."/>
            <person name="Argon Y."/>
        </authorList>
    </citation>
    <scope>FUNCTION</scope>
</reference>
<reference key="6">
    <citation type="submission" date="2006-10" db="PDB data bank">
        <title>The solution structure of the first thioredoxin domain of mouse protein disulfide-isomerase A6.</title>
        <authorList>
            <consortium name="RIKEN structural genomics initiative (RSGI)"/>
        </authorList>
    </citation>
    <scope>STRUCTURE BY NMR OF 16-132</scope>
</reference>
<organism>
    <name type="scientific">Mus musculus</name>
    <name type="common">Mouse</name>
    <dbReference type="NCBI Taxonomy" id="10090"/>
    <lineage>
        <taxon>Eukaryota</taxon>
        <taxon>Metazoa</taxon>
        <taxon>Chordata</taxon>
        <taxon>Craniata</taxon>
        <taxon>Vertebrata</taxon>
        <taxon>Euteleostomi</taxon>
        <taxon>Mammalia</taxon>
        <taxon>Eutheria</taxon>
        <taxon>Euarchontoglires</taxon>
        <taxon>Glires</taxon>
        <taxon>Rodentia</taxon>
        <taxon>Myomorpha</taxon>
        <taxon>Muroidea</taxon>
        <taxon>Muridae</taxon>
        <taxon>Murinae</taxon>
        <taxon>Mus</taxon>
        <taxon>Mus</taxon>
    </lineage>
</organism>
<name>PDIA6_MOUSE</name>
<keyword id="KW-0002">3D-structure</keyword>
<keyword id="KW-1003">Cell membrane</keyword>
<keyword id="KW-0143">Chaperone</keyword>
<keyword id="KW-0903">Direct protein sequencing</keyword>
<keyword id="KW-1015">Disulfide bond</keyword>
<keyword id="KW-0256">Endoplasmic reticulum</keyword>
<keyword id="KW-0413">Isomerase</keyword>
<keyword id="KW-0472">Membrane</keyword>
<keyword id="KW-0597">Phosphoprotein</keyword>
<keyword id="KW-0676">Redox-active center</keyword>
<keyword id="KW-1185">Reference proteome</keyword>
<keyword id="KW-0677">Repeat</keyword>
<keyword id="KW-0732">Signal</keyword>
<feature type="signal peptide" evidence="1">
    <location>
        <begin position="1"/>
        <end position="19"/>
    </location>
</feature>
<feature type="chain" id="PRO_0000034238" description="Protein disulfide-isomerase A6">
    <location>
        <begin position="20"/>
        <end position="440"/>
    </location>
</feature>
<feature type="domain" description="Thioredoxin 1" evidence="3">
    <location>
        <begin position="20"/>
        <end position="133"/>
    </location>
</feature>
<feature type="domain" description="Thioredoxin 2" evidence="3">
    <location>
        <begin position="151"/>
        <end position="287"/>
    </location>
</feature>
<feature type="region of interest" description="Disordered" evidence="5">
    <location>
        <begin position="139"/>
        <end position="161"/>
    </location>
</feature>
<feature type="region of interest" description="Disordered" evidence="5">
    <location>
        <begin position="399"/>
        <end position="440"/>
    </location>
</feature>
<feature type="short sequence motif" description="Prevents secretion from ER" evidence="4">
    <location>
        <begin position="437"/>
        <end position="440"/>
    </location>
</feature>
<feature type="compositionally biased region" description="Basic and acidic residues" evidence="5">
    <location>
        <begin position="152"/>
        <end position="161"/>
    </location>
</feature>
<feature type="compositionally biased region" description="Acidic residues" evidence="5">
    <location>
        <begin position="419"/>
        <end position="440"/>
    </location>
</feature>
<feature type="modified residue" description="Phosphoserine" evidence="8">
    <location>
        <position position="129"/>
    </location>
</feature>
<feature type="modified residue" description="Phosphoserine" evidence="2">
    <location>
        <position position="156"/>
    </location>
</feature>
<feature type="modified residue" description="Phosphoserine" evidence="2">
    <location>
        <position position="158"/>
    </location>
</feature>
<feature type="modified residue" description="Phosphoserine" evidence="8">
    <location>
        <position position="428"/>
    </location>
</feature>
<feature type="disulfide bond" description="Redox-active" evidence="3">
    <location>
        <begin position="55"/>
        <end position="58"/>
    </location>
</feature>
<feature type="disulfide bond" description="Redox-active" evidence="3">
    <location>
        <begin position="190"/>
        <end position="193"/>
    </location>
</feature>
<feature type="sequence conflict" description="In Ref. 1; BAC36392." evidence="7" ref="1">
    <original>V</original>
    <variation>M</variation>
    <location>
        <position position="224"/>
    </location>
</feature>
<feature type="strand" evidence="9">
    <location>
        <begin position="25"/>
        <end position="29"/>
    </location>
</feature>
<feature type="turn" evidence="9">
    <location>
        <begin position="32"/>
        <end position="34"/>
    </location>
</feature>
<feature type="helix" evidence="9">
    <location>
        <begin position="35"/>
        <end position="38"/>
    </location>
</feature>
<feature type="turn" evidence="9">
    <location>
        <begin position="39"/>
        <end position="41"/>
    </location>
</feature>
<feature type="strand" evidence="9">
    <location>
        <begin position="46"/>
        <end position="51"/>
    </location>
</feature>
<feature type="helix" evidence="9">
    <location>
        <begin position="59"/>
        <end position="61"/>
    </location>
</feature>
<feature type="helix" evidence="9">
    <location>
        <begin position="62"/>
        <end position="71"/>
    </location>
</feature>
<feature type="turn" evidence="9">
    <location>
        <begin position="72"/>
        <end position="75"/>
    </location>
</feature>
<feature type="strand" evidence="9">
    <location>
        <begin position="76"/>
        <end position="82"/>
    </location>
</feature>
<feature type="turn" evidence="9">
    <location>
        <begin position="83"/>
        <end position="85"/>
    </location>
</feature>
<feature type="helix" evidence="9">
    <location>
        <begin position="87"/>
        <end position="93"/>
    </location>
</feature>
<feature type="strand" evidence="9">
    <location>
        <begin position="97"/>
        <end position="106"/>
    </location>
</feature>
<feature type="helix" evidence="9">
    <location>
        <begin position="120"/>
        <end position="132"/>
    </location>
</feature>